<feature type="transit peptide" description="Mitochondrion" evidence="4">
    <location>
        <begin position="1"/>
        <end position="29"/>
    </location>
</feature>
<feature type="chain" id="PRO_0000020056" description="NADH dehydrogenase [ubiquinone] 1 beta subcomplex subunit 11, mitochondrial">
    <location>
        <begin position="30"/>
        <end position="154"/>
    </location>
</feature>
<feature type="transmembrane region" description="Helical" evidence="2">
    <location>
        <begin position="89"/>
        <end position="109"/>
    </location>
</feature>
<feature type="region of interest" description="Disordered" evidence="3">
    <location>
        <begin position="40"/>
        <end position="77"/>
    </location>
</feature>
<feature type="compositionally biased region" description="Basic and acidic residues" evidence="3">
    <location>
        <begin position="66"/>
        <end position="77"/>
    </location>
</feature>
<feature type="strand" evidence="7">
    <location>
        <begin position="54"/>
        <end position="56"/>
    </location>
</feature>
<feature type="helix" evidence="6">
    <location>
        <begin position="66"/>
        <end position="69"/>
    </location>
</feature>
<feature type="helix" evidence="6">
    <location>
        <begin position="80"/>
        <end position="94"/>
    </location>
</feature>
<feature type="turn" evidence="6">
    <location>
        <begin position="95"/>
        <end position="97"/>
    </location>
</feature>
<feature type="helix" evidence="6">
    <location>
        <begin position="98"/>
        <end position="107"/>
    </location>
</feature>
<feature type="helix" evidence="6">
    <location>
        <begin position="112"/>
        <end position="114"/>
    </location>
</feature>
<feature type="helix" evidence="6">
    <location>
        <begin position="115"/>
        <end position="130"/>
    </location>
</feature>
<feature type="turn" evidence="6">
    <location>
        <begin position="131"/>
        <end position="133"/>
    </location>
</feature>
<feature type="helix" evidence="6">
    <location>
        <begin position="144"/>
        <end position="146"/>
    </location>
</feature>
<comment type="function">
    <text evidence="1">Accessory subunit of the mitochondrial membrane respiratory chain NADH dehydrogenase (Complex I), that is believed not to be involved in catalysis. Complex I functions in the transfer of electrons from NADH to the respiratory chain. The immediate electron acceptor for the enzyme is believed to be ubiquinone.</text>
</comment>
<comment type="subunit">
    <text evidence="1">Complex I is composed of 45 different subunits. Interacts with BCAP31.</text>
</comment>
<comment type="subcellular location">
    <subcellularLocation>
        <location evidence="1">Mitochondrion inner membrane</location>
        <topology evidence="1">Single-pass membrane protein</topology>
    </subcellularLocation>
    <text evidence="1">The interaction with BCAP31 mediates mitochondria localization.</text>
</comment>
<comment type="similarity">
    <text evidence="5">Belongs to the complex I NDUFB11 subunit family.</text>
</comment>
<reference key="1">
    <citation type="submission" date="2005-08" db="EMBL/GenBank/DDBJ databases">
        <authorList>
            <consortium name="NIH - Mammalian Gene Collection (MGC) project"/>
        </authorList>
    </citation>
    <scope>NUCLEOTIDE SEQUENCE [LARGE SCALE MRNA]</scope>
    <source>
        <strain>Crossbred X Angus</strain>
        <tissue>Ileum</tissue>
    </source>
</reference>
<reference key="2">
    <citation type="journal article" date="2002" name="J. Biol. Chem.">
        <title>Definition of the nuclear encoded protein composition of bovine heart mitochondrial complex I. Identification two new subunits.</title>
        <authorList>
            <person name="Carroll J."/>
            <person name="Shannon R.J."/>
            <person name="Fearnley I.M."/>
            <person name="Walker J.E."/>
            <person name="Hirst J."/>
        </authorList>
    </citation>
    <scope>NUCLEOTIDE SEQUENCE [MRNA] OF 22-154</scope>
    <scope>PROTEIN SEQUENCE OF 30-47</scope>
    <source>
        <tissue>Heart</tissue>
    </source>
</reference>
<reference key="3">
    <citation type="journal article" date="2008" name="Anal. Biochem.">
        <title>Subunit analysis of bovine heart complex I by reversed-phase high-performance liquid chromatography, electrospray ionization-tandem mass spectrometry, and matrix-assisted laser desorption/ionization-time-of-flight mass spectrometry.</title>
        <authorList>
            <person name="Lemma-Gray P."/>
            <person name="Valusova E."/>
            <person name="Carroll C.A."/>
            <person name="Weintraub S.T."/>
            <person name="Musatov A."/>
            <person name="Robinson N.C."/>
        </authorList>
    </citation>
    <scope>SUBUNIT</scope>
    <scope>IDENTIFICATION IN COMPLEX I</scope>
    <scope>SUBCELLULAR LOCATION</scope>
</reference>
<proteinExistence type="evidence at protein level"/>
<gene>
    <name type="primary">NDUFB11</name>
</gene>
<organism>
    <name type="scientific">Bos taurus</name>
    <name type="common">Bovine</name>
    <dbReference type="NCBI Taxonomy" id="9913"/>
    <lineage>
        <taxon>Eukaryota</taxon>
        <taxon>Metazoa</taxon>
        <taxon>Chordata</taxon>
        <taxon>Craniata</taxon>
        <taxon>Vertebrata</taxon>
        <taxon>Euteleostomi</taxon>
        <taxon>Mammalia</taxon>
        <taxon>Eutheria</taxon>
        <taxon>Laurasiatheria</taxon>
        <taxon>Artiodactyla</taxon>
        <taxon>Ruminantia</taxon>
        <taxon>Pecora</taxon>
        <taxon>Bovidae</taxon>
        <taxon>Bovinae</taxon>
        <taxon>Bos</taxon>
    </lineage>
</organism>
<keyword id="KW-0002">3D-structure</keyword>
<keyword id="KW-0903">Direct protein sequencing</keyword>
<keyword id="KW-0249">Electron transport</keyword>
<keyword id="KW-0472">Membrane</keyword>
<keyword id="KW-0496">Mitochondrion</keyword>
<keyword id="KW-0999">Mitochondrion inner membrane</keyword>
<keyword id="KW-1185">Reference proteome</keyword>
<keyword id="KW-0679">Respiratory chain</keyword>
<keyword id="KW-0809">Transit peptide</keyword>
<keyword id="KW-0812">Transmembrane</keyword>
<keyword id="KW-1133">Transmembrane helix</keyword>
<keyword id="KW-0813">Transport</keyword>
<name>NDUBB_BOVIN</name>
<accession>Q8HXG5</accession>
<accession>Q3T137</accession>
<dbReference type="EMBL" id="BC102141">
    <property type="protein sequence ID" value="AAI02142.1"/>
    <property type="molecule type" value="mRNA"/>
</dbReference>
<dbReference type="EMBL" id="AJ510149">
    <property type="protein sequence ID" value="CAD52868.1"/>
    <property type="molecule type" value="mRNA"/>
</dbReference>
<dbReference type="RefSeq" id="NP_001028792.1">
    <property type="nucleotide sequence ID" value="NM_001033620.2"/>
</dbReference>
<dbReference type="PDB" id="5LC5">
    <property type="method" value="EM"/>
    <property type="resolution" value="4.35 A"/>
    <property type="chains" value="g=1-154"/>
</dbReference>
<dbReference type="PDB" id="5LDW">
    <property type="method" value="EM"/>
    <property type="resolution" value="4.27 A"/>
    <property type="chains" value="g=30-154"/>
</dbReference>
<dbReference type="PDB" id="5LDX">
    <property type="method" value="EM"/>
    <property type="resolution" value="5.60 A"/>
    <property type="chains" value="g=30-154"/>
</dbReference>
<dbReference type="PDB" id="5O31">
    <property type="method" value="EM"/>
    <property type="resolution" value="4.13 A"/>
    <property type="chains" value="g=30-154"/>
</dbReference>
<dbReference type="PDB" id="7DGQ">
    <property type="method" value="EM"/>
    <property type="resolution" value="5.00 A"/>
    <property type="chains" value="h=30-154"/>
</dbReference>
<dbReference type="PDB" id="7DGR">
    <property type="method" value="EM"/>
    <property type="resolution" value="4.60 A"/>
    <property type="chains" value="h=30-154"/>
</dbReference>
<dbReference type="PDB" id="7DGS">
    <property type="method" value="EM"/>
    <property type="resolution" value="7.80 A"/>
    <property type="chains" value="h=30-154"/>
</dbReference>
<dbReference type="PDB" id="7DGZ">
    <property type="method" value="EM"/>
    <property type="resolution" value="3.80 A"/>
    <property type="chains" value="h=30-154"/>
</dbReference>
<dbReference type="PDB" id="7DH0">
    <property type="method" value="EM"/>
    <property type="resolution" value="4.20 A"/>
    <property type="chains" value="h=30-154"/>
</dbReference>
<dbReference type="PDB" id="7DKF">
    <property type="method" value="EM"/>
    <property type="resolution" value="8.30 A"/>
    <property type="chains" value="h2=30-154"/>
</dbReference>
<dbReference type="PDB" id="7QSD">
    <property type="method" value="EM"/>
    <property type="resolution" value="3.10 A"/>
    <property type="chains" value="g=1-154"/>
</dbReference>
<dbReference type="PDB" id="7QSK">
    <property type="method" value="EM"/>
    <property type="resolution" value="2.84 A"/>
    <property type="chains" value="g=1-154"/>
</dbReference>
<dbReference type="PDB" id="7QSL">
    <property type="method" value="EM"/>
    <property type="resolution" value="2.76 A"/>
    <property type="chains" value="g=1-154"/>
</dbReference>
<dbReference type="PDB" id="7QSM">
    <property type="method" value="EM"/>
    <property type="resolution" value="2.30 A"/>
    <property type="chains" value="g=1-154"/>
</dbReference>
<dbReference type="PDB" id="7QSN">
    <property type="method" value="EM"/>
    <property type="resolution" value="2.81 A"/>
    <property type="chains" value="g=1-154"/>
</dbReference>
<dbReference type="PDB" id="7QSO">
    <property type="method" value="EM"/>
    <property type="resolution" value="3.02 A"/>
    <property type="chains" value="g=1-154"/>
</dbReference>
<dbReference type="PDB" id="7R41">
    <property type="method" value="EM"/>
    <property type="resolution" value="2.30 A"/>
    <property type="chains" value="g=1-154"/>
</dbReference>
<dbReference type="PDB" id="7R42">
    <property type="method" value="EM"/>
    <property type="resolution" value="2.30 A"/>
    <property type="chains" value="g=1-154"/>
</dbReference>
<dbReference type="PDB" id="7R43">
    <property type="method" value="EM"/>
    <property type="resolution" value="2.40 A"/>
    <property type="chains" value="g=1-154"/>
</dbReference>
<dbReference type="PDB" id="7R44">
    <property type="method" value="EM"/>
    <property type="resolution" value="2.40 A"/>
    <property type="chains" value="g=1-154"/>
</dbReference>
<dbReference type="PDB" id="7R45">
    <property type="method" value="EM"/>
    <property type="resolution" value="2.40 A"/>
    <property type="chains" value="g=1-154"/>
</dbReference>
<dbReference type="PDB" id="7R46">
    <property type="method" value="EM"/>
    <property type="resolution" value="2.40 A"/>
    <property type="chains" value="g=1-154"/>
</dbReference>
<dbReference type="PDB" id="7R47">
    <property type="method" value="EM"/>
    <property type="resolution" value="2.30 A"/>
    <property type="chains" value="g=1-154"/>
</dbReference>
<dbReference type="PDB" id="7R48">
    <property type="method" value="EM"/>
    <property type="resolution" value="2.30 A"/>
    <property type="chains" value="g=1-154"/>
</dbReference>
<dbReference type="PDB" id="7R4C">
    <property type="method" value="EM"/>
    <property type="resolution" value="2.30 A"/>
    <property type="chains" value="g=1-154"/>
</dbReference>
<dbReference type="PDB" id="7R4D">
    <property type="method" value="EM"/>
    <property type="resolution" value="2.30 A"/>
    <property type="chains" value="g=1-154"/>
</dbReference>
<dbReference type="PDB" id="7R4F">
    <property type="method" value="EM"/>
    <property type="resolution" value="2.40 A"/>
    <property type="chains" value="g=1-154"/>
</dbReference>
<dbReference type="PDB" id="7R4G">
    <property type="method" value="EM"/>
    <property type="resolution" value="2.50 A"/>
    <property type="chains" value="g=1-154"/>
</dbReference>
<dbReference type="PDB" id="8Q0A">
    <property type="method" value="EM"/>
    <property type="resolution" value="3.10 A"/>
    <property type="chains" value="g=1-154"/>
</dbReference>
<dbReference type="PDB" id="8Q0F">
    <property type="method" value="EM"/>
    <property type="resolution" value="3.10 A"/>
    <property type="chains" value="g=1-154"/>
</dbReference>
<dbReference type="PDB" id="8Q0J">
    <property type="method" value="EM"/>
    <property type="resolution" value="3.80 A"/>
    <property type="chains" value="g=1-154"/>
</dbReference>
<dbReference type="PDB" id="8Q0M">
    <property type="method" value="EM"/>
    <property type="resolution" value="3.10 A"/>
    <property type="chains" value="g=1-154"/>
</dbReference>
<dbReference type="PDB" id="8Q0O">
    <property type="method" value="EM"/>
    <property type="resolution" value="3.10 A"/>
    <property type="chains" value="g=1-154"/>
</dbReference>
<dbReference type="PDB" id="8Q0Q">
    <property type="method" value="EM"/>
    <property type="resolution" value="3.60 A"/>
    <property type="chains" value="g=1-154"/>
</dbReference>
<dbReference type="PDB" id="8Q1P">
    <property type="method" value="EM"/>
    <property type="resolution" value="2.90 A"/>
    <property type="chains" value="g=1-154"/>
</dbReference>
<dbReference type="PDB" id="8Q1U">
    <property type="method" value="EM"/>
    <property type="resolution" value="3.30 A"/>
    <property type="chains" value="g=1-154"/>
</dbReference>
<dbReference type="PDB" id="8Q1Y">
    <property type="method" value="EM"/>
    <property type="resolution" value="2.60 A"/>
    <property type="chains" value="g=1-154"/>
</dbReference>
<dbReference type="PDB" id="8Q25">
    <property type="method" value="EM"/>
    <property type="resolution" value="2.80 A"/>
    <property type="chains" value="g=1-154"/>
</dbReference>
<dbReference type="PDB" id="8Q45">
    <property type="method" value="EM"/>
    <property type="resolution" value="2.70 A"/>
    <property type="chains" value="g=1-154"/>
</dbReference>
<dbReference type="PDB" id="8Q46">
    <property type="method" value="EM"/>
    <property type="resolution" value="2.60 A"/>
    <property type="chains" value="g=1-154"/>
</dbReference>
<dbReference type="PDB" id="8Q47">
    <property type="method" value="EM"/>
    <property type="resolution" value="2.90 A"/>
    <property type="chains" value="g=1-154"/>
</dbReference>
<dbReference type="PDB" id="8Q48">
    <property type="method" value="EM"/>
    <property type="resolution" value="2.50 A"/>
    <property type="chains" value="g=1-154"/>
</dbReference>
<dbReference type="PDB" id="8Q49">
    <property type="method" value="EM"/>
    <property type="resolution" value="2.60 A"/>
    <property type="chains" value="g=1-154"/>
</dbReference>
<dbReference type="PDB" id="8Q4A">
    <property type="method" value="EM"/>
    <property type="resolution" value="2.60 A"/>
    <property type="chains" value="g=1-154"/>
</dbReference>
<dbReference type="PDBsum" id="5LC5"/>
<dbReference type="PDBsum" id="5LDW"/>
<dbReference type="PDBsum" id="5LDX"/>
<dbReference type="PDBsum" id="5O31"/>
<dbReference type="PDBsum" id="7DGQ"/>
<dbReference type="PDBsum" id="7DGR"/>
<dbReference type="PDBsum" id="7DGS"/>
<dbReference type="PDBsum" id="7DGZ"/>
<dbReference type="PDBsum" id="7DH0"/>
<dbReference type="PDBsum" id="7DKF"/>
<dbReference type="PDBsum" id="7QSD"/>
<dbReference type="PDBsum" id="7QSK"/>
<dbReference type="PDBsum" id="7QSL"/>
<dbReference type="PDBsum" id="7QSM"/>
<dbReference type="PDBsum" id="7QSN"/>
<dbReference type="PDBsum" id="7QSO"/>
<dbReference type="PDBsum" id="7R41"/>
<dbReference type="PDBsum" id="7R42"/>
<dbReference type="PDBsum" id="7R43"/>
<dbReference type="PDBsum" id="7R44"/>
<dbReference type="PDBsum" id="7R45"/>
<dbReference type="PDBsum" id="7R46"/>
<dbReference type="PDBsum" id="7R47"/>
<dbReference type="PDBsum" id="7R48"/>
<dbReference type="PDBsum" id="7R4C"/>
<dbReference type="PDBsum" id="7R4D"/>
<dbReference type="PDBsum" id="7R4F"/>
<dbReference type="PDBsum" id="7R4G"/>
<dbReference type="PDBsum" id="8Q0A"/>
<dbReference type="PDBsum" id="8Q0F"/>
<dbReference type="PDBsum" id="8Q0J"/>
<dbReference type="PDBsum" id="8Q0M"/>
<dbReference type="PDBsum" id="8Q0O"/>
<dbReference type="PDBsum" id="8Q0Q"/>
<dbReference type="PDBsum" id="8Q1P"/>
<dbReference type="PDBsum" id="8Q1U"/>
<dbReference type="PDBsum" id="8Q1Y"/>
<dbReference type="PDBsum" id="8Q25"/>
<dbReference type="PDBsum" id="8Q45"/>
<dbReference type="PDBsum" id="8Q46"/>
<dbReference type="PDBsum" id="8Q47"/>
<dbReference type="PDBsum" id="8Q48"/>
<dbReference type="PDBsum" id="8Q49"/>
<dbReference type="PDBsum" id="8Q4A"/>
<dbReference type="EMDB" id="EMD-14127"/>
<dbReference type="EMDB" id="EMD-14132"/>
<dbReference type="EMDB" id="EMD-14133"/>
<dbReference type="EMDB" id="EMD-14134"/>
<dbReference type="EMDB" id="EMD-14139"/>
<dbReference type="EMDB" id="EMD-14140"/>
<dbReference type="EMDB" id="EMD-14251"/>
<dbReference type="EMDB" id="EMD-14256"/>
<dbReference type="EMDB" id="EMD-14261"/>
<dbReference type="EMDB" id="EMD-14266"/>
<dbReference type="EMDB" id="EMD-14272"/>
<dbReference type="EMDB" id="EMD-14277"/>
<dbReference type="EMDB" id="EMD-14282"/>
<dbReference type="EMDB" id="EMD-14287"/>
<dbReference type="EMDB" id="EMD-14292"/>
<dbReference type="EMDB" id="EMD-14297"/>
<dbReference type="EMDB" id="EMD-14302"/>
<dbReference type="EMDB" id="EMD-14307"/>
<dbReference type="EMDB" id="EMD-18051"/>
<dbReference type="EMDB" id="EMD-18052"/>
<dbReference type="EMDB" id="EMD-18054"/>
<dbReference type="EMDB" id="EMD-18055"/>
<dbReference type="EMDB" id="EMD-18057"/>
<dbReference type="EMDB" id="EMD-18059"/>
<dbReference type="EMDB" id="EMD-18066"/>
<dbReference type="EMDB" id="EMD-18067"/>
<dbReference type="EMDB" id="EMD-18068"/>
<dbReference type="EMDB" id="EMD-18069"/>
<dbReference type="EMDB" id="EMD-18138"/>
<dbReference type="EMDB" id="EMD-18139"/>
<dbReference type="EMDB" id="EMD-18140"/>
<dbReference type="EMDB" id="EMD-18141"/>
<dbReference type="EMDB" id="EMD-18142"/>
<dbReference type="EMDB" id="EMD-18143"/>
<dbReference type="EMDB" id="EMD-30673"/>
<dbReference type="EMDB" id="EMD-30674"/>
<dbReference type="EMDB" id="EMD-30675"/>
<dbReference type="EMDB" id="EMD-30676"/>
<dbReference type="EMDB" id="EMD-30677"/>
<dbReference type="EMDB" id="EMD-30706"/>
<dbReference type="EMDB" id="EMD-3731"/>
<dbReference type="EMDB" id="EMD-4032"/>
<dbReference type="EMDB" id="EMD-4040"/>
<dbReference type="EMDB" id="EMD-4041"/>
<dbReference type="SMR" id="Q8HXG5"/>
<dbReference type="CORUM" id="Q8HXG5"/>
<dbReference type="DIP" id="DIP-38813N"/>
<dbReference type="FunCoup" id="Q8HXG5">
    <property type="interactions" value="1635"/>
</dbReference>
<dbReference type="IntAct" id="Q8HXG5">
    <property type="interactions" value="2"/>
</dbReference>
<dbReference type="STRING" id="9913.ENSBTAP00000067442"/>
<dbReference type="TCDB" id="3.D.1.6.1">
    <property type="family name" value="the h+ or na+-translocating nadh dehydrogenase (ndh) family"/>
</dbReference>
<dbReference type="GlyGen" id="Q8HXG5">
    <property type="glycosylation" value="1 site, 1 O-linked glycan (1 site)"/>
</dbReference>
<dbReference type="PaxDb" id="9913-ENSBTAP00000055738"/>
<dbReference type="Ensembl" id="ENSBTAT00000090942.1">
    <property type="protein sequence ID" value="ENSBTAP00000098515.1"/>
    <property type="gene ID" value="ENSBTAG00000068665.1"/>
</dbReference>
<dbReference type="GeneID" id="404161"/>
<dbReference type="KEGG" id="bta:404161"/>
<dbReference type="CTD" id="54539"/>
<dbReference type="VEuPathDB" id="HostDB:ENSBTAG00000051287"/>
<dbReference type="eggNOG" id="KOG4808">
    <property type="taxonomic scope" value="Eukaryota"/>
</dbReference>
<dbReference type="GeneTree" id="ENSGT00390000003022"/>
<dbReference type="HOGENOM" id="CLU_109862_0_0_1"/>
<dbReference type="InParanoid" id="Q8HXG5"/>
<dbReference type="OMA" id="DYRMKEW"/>
<dbReference type="OrthoDB" id="5917019at2759"/>
<dbReference type="TreeFam" id="TF314671"/>
<dbReference type="Reactome" id="R-BTA-611105">
    <property type="pathway name" value="Respiratory electron transport"/>
</dbReference>
<dbReference type="Reactome" id="R-BTA-6799198">
    <property type="pathway name" value="Complex I biogenesis"/>
</dbReference>
<dbReference type="Proteomes" id="UP000009136">
    <property type="component" value="Chromosome X"/>
</dbReference>
<dbReference type="Bgee" id="ENSBTAG00000051287">
    <property type="expression patterns" value="Expressed in tongue muscle and 103 other cell types or tissues"/>
</dbReference>
<dbReference type="GO" id="GO:0005743">
    <property type="term" value="C:mitochondrial inner membrane"/>
    <property type="evidence" value="ECO:0007669"/>
    <property type="project" value="UniProtKB-SubCell"/>
</dbReference>
<dbReference type="GO" id="GO:0005739">
    <property type="term" value="C:mitochondrion"/>
    <property type="evidence" value="ECO:0000305"/>
    <property type="project" value="UniProtKB"/>
</dbReference>
<dbReference type="GO" id="GO:0045271">
    <property type="term" value="C:respiratory chain complex I"/>
    <property type="evidence" value="ECO:0000314"/>
    <property type="project" value="UniProtKB"/>
</dbReference>
<dbReference type="InterPro" id="IPR019329">
    <property type="entry name" value="NADH_UbQ_OxRdtase_ESSS_su"/>
</dbReference>
<dbReference type="PANTHER" id="PTHR13327:SF0">
    <property type="entry name" value="NADH DEHYDROGENASE [UBIQUINONE] 1 BETA SUBCOMPLEX SUBUNIT 11, MITOCHONDRIAL"/>
    <property type="match status" value="1"/>
</dbReference>
<dbReference type="PANTHER" id="PTHR13327">
    <property type="entry name" value="NADH-UBIQUINONE OXIDOREDUCTASE ESSS SUBUNIT, MITOCHONDRIAL PRECURSOR"/>
    <property type="match status" value="1"/>
</dbReference>
<dbReference type="Pfam" id="PF10183">
    <property type="entry name" value="ESSS"/>
    <property type="match status" value="1"/>
</dbReference>
<protein>
    <recommendedName>
        <fullName>NADH dehydrogenase [ubiquinone] 1 beta subcomplex subunit 11, mitochondrial</fullName>
    </recommendedName>
    <alternativeName>
        <fullName>Complex I-ESSS</fullName>
        <shortName>CI-ESSS</shortName>
    </alternativeName>
    <alternativeName>
        <fullName>NADH-ubiquinone oxidoreductase ESSS subunit</fullName>
    </alternativeName>
</protein>
<evidence type="ECO:0000250" key="1">
    <source>
        <dbReference type="UniProtKB" id="Q9NX14"/>
    </source>
</evidence>
<evidence type="ECO:0000255" key="2"/>
<evidence type="ECO:0000256" key="3">
    <source>
        <dbReference type="SAM" id="MobiDB-lite"/>
    </source>
</evidence>
<evidence type="ECO:0000269" key="4">
    <source>
    </source>
</evidence>
<evidence type="ECO:0000305" key="5"/>
<evidence type="ECO:0007829" key="6">
    <source>
        <dbReference type="PDB" id="7QSM"/>
    </source>
</evidence>
<evidence type="ECO:0007829" key="7">
    <source>
        <dbReference type="PDB" id="8Q48"/>
    </source>
</evidence>
<sequence>MAARMLGLCGRRLLAVAATRGLPAARVRWESSSSRAVIAPSTLAGKRPSEPTLRWQEDPEPEDENLYEKNPDSHGYDKDPAVDIWNMRVVFFFGFSIVLVLGSTFVAYLPDYRMQEWARREAERLVKYREAHGLPIMESNCFDPSKIQLPEDED</sequence>